<keyword id="KW-0002">3D-structure</keyword>
<keyword id="KW-0175">Coiled coil</keyword>
<keyword id="KW-0963">Cytoplasm</keyword>
<keyword id="KW-0903">Direct protein sequencing</keyword>
<keyword id="KW-0967">Endosome</keyword>
<keyword id="KW-0472">Membrane</keyword>
<keyword id="KW-0479">Metal-binding</keyword>
<keyword id="KW-0597">Phosphoprotein</keyword>
<keyword id="KW-1267">Proteomics identification</keyword>
<keyword id="KW-1185">Reference proteome</keyword>
<keyword id="KW-0862">Zinc</keyword>
<keyword id="KW-0863">Zinc-finger</keyword>
<proteinExistence type="evidence at protein level"/>
<dbReference type="EMBL" id="L40157">
    <property type="protein sequence ID" value="AAA79121.1"/>
    <property type="molecule type" value="mRNA"/>
</dbReference>
<dbReference type="EMBL" id="X78998">
    <property type="protein sequence ID" value="CAA55632.1"/>
    <property type="molecule type" value="mRNA"/>
</dbReference>
<dbReference type="EMBL" id="AC016136">
    <property type="status" value="NOT_ANNOTATED_CDS"/>
    <property type="molecule type" value="Genomic_DNA"/>
</dbReference>
<dbReference type="EMBL" id="AC021646">
    <property type="status" value="NOT_ANNOTATED_CDS"/>
    <property type="molecule type" value="Genomic_DNA"/>
</dbReference>
<dbReference type="EMBL" id="AC026111">
    <property type="status" value="NOT_ANNOTATED_CDS"/>
    <property type="molecule type" value="Genomic_DNA"/>
</dbReference>
<dbReference type="CCDS" id="CCDS31874.1"/>
<dbReference type="PIR" id="A57013">
    <property type="entry name" value="A57013"/>
</dbReference>
<dbReference type="RefSeq" id="NP_003557.3">
    <property type="nucleotide sequence ID" value="NM_003566.4"/>
</dbReference>
<dbReference type="PDB" id="1HYI">
    <property type="method" value="NMR"/>
    <property type="chains" value="A=1347-1411"/>
</dbReference>
<dbReference type="PDB" id="1HYJ">
    <property type="method" value="NMR"/>
    <property type="chains" value="A=1347-1411"/>
</dbReference>
<dbReference type="PDB" id="1JOC">
    <property type="method" value="X-ray"/>
    <property type="resolution" value="2.20 A"/>
    <property type="chains" value="A/B=1287-1324, A/B=1326-1411"/>
</dbReference>
<dbReference type="PDB" id="3MJH">
    <property type="method" value="X-ray"/>
    <property type="resolution" value="2.03 A"/>
    <property type="chains" value="B/D=36-69"/>
</dbReference>
<dbReference type="PDBsum" id="1HYI"/>
<dbReference type="PDBsum" id="1HYJ"/>
<dbReference type="PDBsum" id="1JOC"/>
<dbReference type="PDBsum" id="3MJH"/>
<dbReference type="BMRB" id="Q15075"/>
<dbReference type="SMR" id="Q15075"/>
<dbReference type="BioGRID" id="113999">
    <property type="interactions" value="168"/>
</dbReference>
<dbReference type="CORUM" id="Q15075"/>
<dbReference type="FunCoup" id="Q15075">
    <property type="interactions" value="2202"/>
</dbReference>
<dbReference type="IntAct" id="Q15075">
    <property type="interactions" value="129"/>
</dbReference>
<dbReference type="MINT" id="Q15075"/>
<dbReference type="STRING" id="9606.ENSP00000317955"/>
<dbReference type="DrugBank" id="DB02942">
    <property type="generic name" value="Inositol 1,3-Bisphosphate"/>
</dbReference>
<dbReference type="GlyGen" id="Q15075">
    <property type="glycosylation" value="4 sites, 1 N-linked glycan (1 site), 1 O-linked glycan (3 sites)"/>
</dbReference>
<dbReference type="iPTMnet" id="Q15075"/>
<dbReference type="MetOSite" id="Q15075"/>
<dbReference type="PhosphoSitePlus" id="Q15075"/>
<dbReference type="SwissPalm" id="Q15075"/>
<dbReference type="BioMuta" id="EEA1"/>
<dbReference type="DMDM" id="229462866"/>
<dbReference type="jPOST" id="Q15075"/>
<dbReference type="MassIVE" id="Q15075"/>
<dbReference type="PaxDb" id="9606-ENSP00000317955"/>
<dbReference type="PeptideAtlas" id="Q15075"/>
<dbReference type="ProteomicsDB" id="60427"/>
<dbReference type="Pumba" id="Q15075"/>
<dbReference type="Antibodypedia" id="3127">
    <property type="antibodies" value="542 antibodies from 45 providers"/>
</dbReference>
<dbReference type="DNASU" id="8411"/>
<dbReference type="Ensembl" id="ENST00000322349.13">
    <property type="protein sequence ID" value="ENSP00000317955.8"/>
    <property type="gene ID" value="ENSG00000102189.17"/>
</dbReference>
<dbReference type="GeneID" id="8411"/>
<dbReference type="KEGG" id="hsa:8411"/>
<dbReference type="MANE-Select" id="ENST00000322349.13">
    <property type="protein sequence ID" value="ENSP00000317955.8"/>
    <property type="RefSeq nucleotide sequence ID" value="NM_003566.4"/>
    <property type="RefSeq protein sequence ID" value="NP_003557.3"/>
</dbReference>
<dbReference type="UCSC" id="uc001tck.4">
    <property type="organism name" value="human"/>
</dbReference>
<dbReference type="AGR" id="HGNC:3185"/>
<dbReference type="CTD" id="8411"/>
<dbReference type="DisGeNET" id="8411"/>
<dbReference type="GeneCards" id="EEA1"/>
<dbReference type="HGNC" id="HGNC:3185">
    <property type="gene designation" value="EEA1"/>
</dbReference>
<dbReference type="HPA" id="ENSG00000102189">
    <property type="expression patterns" value="Low tissue specificity"/>
</dbReference>
<dbReference type="MIM" id="605070">
    <property type="type" value="gene"/>
</dbReference>
<dbReference type="neXtProt" id="NX_Q15075"/>
<dbReference type="OpenTargets" id="ENSG00000102189"/>
<dbReference type="PharmGKB" id="PA27621"/>
<dbReference type="VEuPathDB" id="HostDB:ENSG00000102189"/>
<dbReference type="eggNOG" id="ENOG502QWB5">
    <property type="taxonomic scope" value="Eukaryota"/>
</dbReference>
<dbReference type="GeneTree" id="ENSGT00940000156910"/>
<dbReference type="HOGENOM" id="CLU_256550_0_0_1"/>
<dbReference type="InParanoid" id="Q15075"/>
<dbReference type="OMA" id="FIAVYQH"/>
<dbReference type="OrthoDB" id="10018316at2759"/>
<dbReference type="PAN-GO" id="Q15075">
    <property type="GO annotations" value="3 GO annotations based on evolutionary models"/>
</dbReference>
<dbReference type="PhylomeDB" id="Q15075"/>
<dbReference type="TreeFam" id="TF329698"/>
<dbReference type="PathwayCommons" id="Q15075"/>
<dbReference type="Reactome" id="R-HSA-168138">
    <property type="pathway name" value="Toll Like Receptor 9 (TLR9) Cascade"/>
</dbReference>
<dbReference type="SignaLink" id="Q15075"/>
<dbReference type="SIGNOR" id="Q15075"/>
<dbReference type="BioGRID-ORCS" id="8411">
    <property type="hits" value="17 hits in 1157 CRISPR screens"/>
</dbReference>
<dbReference type="CD-CODE" id="FB4E32DD">
    <property type="entry name" value="Presynaptic clusters and postsynaptic densities"/>
</dbReference>
<dbReference type="ChiTaRS" id="EEA1">
    <property type="organism name" value="human"/>
</dbReference>
<dbReference type="EvolutionaryTrace" id="Q15075"/>
<dbReference type="GeneWiki" id="EEA1"/>
<dbReference type="GenomeRNAi" id="8411"/>
<dbReference type="Pharos" id="Q15075">
    <property type="development level" value="Tbio"/>
</dbReference>
<dbReference type="PRO" id="PR:Q15075"/>
<dbReference type="Proteomes" id="UP000005640">
    <property type="component" value="Chromosome 12"/>
</dbReference>
<dbReference type="RNAct" id="Q15075">
    <property type="molecule type" value="protein"/>
</dbReference>
<dbReference type="Bgee" id="ENSG00000102189">
    <property type="expression patterns" value="Expressed in calcaneal tendon and 198 other cell types or tissues"/>
</dbReference>
<dbReference type="ExpressionAtlas" id="Q15075">
    <property type="expression patterns" value="baseline and differential"/>
</dbReference>
<dbReference type="GO" id="GO:0044308">
    <property type="term" value="C:axonal spine"/>
    <property type="evidence" value="ECO:0007669"/>
    <property type="project" value="Ensembl"/>
</dbReference>
<dbReference type="GO" id="GO:0005829">
    <property type="term" value="C:cytosol"/>
    <property type="evidence" value="ECO:0000314"/>
    <property type="project" value="UniProtKB"/>
</dbReference>
<dbReference type="GO" id="GO:0005769">
    <property type="term" value="C:early endosome"/>
    <property type="evidence" value="ECO:0000314"/>
    <property type="project" value="UniProtKB"/>
</dbReference>
<dbReference type="GO" id="GO:0031901">
    <property type="term" value="C:early endosome membrane"/>
    <property type="evidence" value="ECO:0000314"/>
    <property type="project" value="UniProtKB"/>
</dbReference>
<dbReference type="GO" id="GO:0070062">
    <property type="term" value="C:extracellular exosome"/>
    <property type="evidence" value="ECO:0007005"/>
    <property type="project" value="UniProtKB"/>
</dbReference>
<dbReference type="GO" id="GO:0098978">
    <property type="term" value="C:glutamatergic synapse"/>
    <property type="evidence" value="ECO:0007669"/>
    <property type="project" value="Ensembl"/>
</dbReference>
<dbReference type="GO" id="GO:0098842">
    <property type="term" value="C:postsynaptic early endosome"/>
    <property type="evidence" value="ECO:0007669"/>
    <property type="project" value="Ensembl"/>
</dbReference>
<dbReference type="GO" id="GO:0098830">
    <property type="term" value="C:presynaptic endosome"/>
    <property type="evidence" value="ECO:0007669"/>
    <property type="project" value="Ensembl"/>
</dbReference>
<dbReference type="GO" id="GO:0055037">
    <property type="term" value="C:recycling endosome"/>
    <property type="evidence" value="ECO:0007669"/>
    <property type="project" value="Ensembl"/>
</dbReference>
<dbReference type="GO" id="GO:0098685">
    <property type="term" value="C:Schaffer collateral - CA1 synapse"/>
    <property type="evidence" value="ECO:0007669"/>
    <property type="project" value="Ensembl"/>
</dbReference>
<dbReference type="GO" id="GO:0005545">
    <property type="term" value="F:1-phosphatidylinositol binding"/>
    <property type="evidence" value="ECO:0000314"/>
    <property type="project" value="UniProtKB"/>
</dbReference>
<dbReference type="GO" id="GO:0005516">
    <property type="term" value="F:calmodulin binding"/>
    <property type="evidence" value="ECO:0000303"/>
    <property type="project" value="UniProtKB"/>
</dbReference>
<dbReference type="GO" id="GO:0030742">
    <property type="term" value="F:GTP-dependent protein binding"/>
    <property type="evidence" value="ECO:0000314"/>
    <property type="project" value="UniProtKB"/>
</dbReference>
<dbReference type="GO" id="GO:0042803">
    <property type="term" value="F:protein homodimerization activity"/>
    <property type="evidence" value="ECO:0000314"/>
    <property type="project" value="UniProtKB"/>
</dbReference>
<dbReference type="GO" id="GO:0008270">
    <property type="term" value="F:zinc ion binding"/>
    <property type="evidence" value="ECO:0000304"/>
    <property type="project" value="UniProtKB"/>
</dbReference>
<dbReference type="GO" id="GO:0099565">
    <property type="term" value="P:chemical synaptic transmission, postsynaptic"/>
    <property type="evidence" value="ECO:0007669"/>
    <property type="project" value="Ensembl"/>
</dbReference>
<dbReference type="GO" id="GO:0045022">
    <property type="term" value="P:early endosome to late endosome transport"/>
    <property type="evidence" value="ECO:0000303"/>
    <property type="project" value="UniProtKB"/>
</dbReference>
<dbReference type="GO" id="GO:0006897">
    <property type="term" value="P:endocytosis"/>
    <property type="evidence" value="ECO:0000315"/>
    <property type="project" value="UniProtKB"/>
</dbReference>
<dbReference type="GO" id="GO:0044788">
    <property type="term" value="P:modulation by host of viral process"/>
    <property type="evidence" value="ECO:0000315"/>
    <property type="project" value="ParkinsonsUK-UCL"/>
</dbReference>
<dbReference type="GO" id="GO:0016189">
    <property type="term" value="P:synaptic vesicle to endosome fusion"/>
    <property type="evidence" value="ECO:0000304"/>
    <property type="project" value="UniProtKB"/>
</dbReference>
<dbReference type="GO" id="GO:0006906">
    <property type="term" value="P:vesicle fusion"/>
    <property type="evidence" value="ECO:0000315"/>
    <property type="project" value="UniProtKB"/>
</dbReference>
<dbReference type="CDD" id="cd15730">
    <property type="entry name" value="FYVE_EEA1"/>
    <property type="match status" value="1"/>
</dbReference>
<dbReference type="FunFam" id="1.20.5.390:FF:000006">
    <property type="entry name" value="Early endosome antigen 1"/>
    <property type="match status" value="1"/>
</dbReference>
<dbReference type="FunFam" id="3.30.40.10:FF:000180">
    <property type="entry name" value="Early endosome antigen 1"/>
    <property type="match status" value="1"/>
</dbReference>
<dbReference type="Gene3D" id="1.20.5.390">
    <property type="entry name" value="L1 transposable element, trimerization domain"/>
    <property type="match status" value="1"/>
</dbReference>
<dbReference type="Gene3D" id="3.30.40.10">
    <property type="entry name" value="Zinc/RING finger domain, C3HC4 (zinc finger)"/>
    <property type="match status" value="1"/>
</dbReference>
<dbReference type="InterPro" id="IPR013087">
    <property type="entry name" value="Znf_C2H2_type"/>
</dbReference>
<dbReference type="InterPro" id="IPR000306">
    <property type="entry name" value="Znf_FYVE"/>
</dbReference>
<dbReference type="InterPro" id="IPR017455">
    <property type="entry name" value="Znf_FYVE-rel"/>
</dbReference>
<dbReference type="InterPro" id="IPR011011">
    <property type="entry name" value="Znf_FYVE_PHD"/>
</dbReference>
<dbReference type="InterPro" id="IPR013083">
    <property type="entry name" value="Znf_RING/FYVE/PHD"/>
</dbReference>
<dbReference type="PANTHER" id="PTHR23164">
    <property type="entry name" value="EARLY ENDOSOME ANTIGEN 1"/>
    <property type="match status" value="1"/>
</dbReference>
<dbReference type="PANTHER" id="PTHR23164:SF30">
    <property type="entry name" value="EARLY ENDOSOME ANTIGEN 1"/>
    <property type="match status" value="1"/>
</dbReference>
<dbReference type="Pfam" id="PF01363">
    <property type="entry name" value="FYVE"/>
    <property type="match status" value="1"/>
</dbReference>
<dbReference type="SMART" id="SM00064">
    <property type="entry name" value="FYVE"/>
    <property type="match status" value="1"/>
</dbReference>
<dbReference type="SUPFAM" id="SSF57903">
    <property type="entry name" value="FYVE/PHD zinc finger"/>
    <property type="match status" value="1"/>
</dbReference>
<dbReference type="SUPFAM" id="SSF90257">
    <property type="entry name" value="Myosin rod fragments"/>
    <property type="match status" value="1"/>
</dbReference>
<dbReference type="PROSITE" id="PS50178">
    <property type="entry name" value="ZF_FYVE"/>
    <property type="match status" value="1"/>
</dbReference>
<dbReference type="PROSITE" id="PS00028">
    <property type="entry name" value="ZINC_FINGER_C2H2_1"/>
    <property type="match status" value="1"/>
</dbReference>
<dbReference type="PROSITE" id="PS50157">
    <property type="entry name" value="ZINC_FINGER_C2H2_2"/>
    <property type="match status" value="1"/>
</dbReference>
<accession>Q15075</accession>
<accession>Q14221</accession>
<comment type="function">
    <text>Binds phospholipid vesicles containing phosphatidylinositol 3-phosphate and participates in endosomal trafficking.</text>
</comment>
<comment type="subunit">
    <text evidence="5 6 7 8 9 10 11 12 13 15 16 17 19">Homodimer. Binds STX6. Binds RAB5A, RAB5B, RAB5C and RAB22A that have been activated by GTP-binding. Interacts with RAB31. Interacts with ERBB2. Interacts with SAMD9 and SAMD9L (PubMed:24029230). May interact with PLEKHF2.</text>
</comment>
<comment type="interaction">
    <interactant intactId="EBI-298113">
        <id>Q15075</id>
    </interactant>
    <interactant intactId="EBI-641062">
        <id>P04626</id>
        <label>ERBB2</label>
    </interactant>
    <organismsDiffer>false</organismsDiffer>
    <experiments>5</experiments>
</comment>
<comment type="interaction">
    <interactant intactId="EBI-298113">
        <id>Q15075</id>
    </interactant>
    <interactant intactId="EBI-399456">
        <id>Q9UL26</id>
        <label>RAB22A</label>
    </interactant>
    <organismsDiffer>false</organismsDiffer>
    <experiments>3</experiments>
</comment>
<comment type="interaction">
    <interactant intactId="EBI-298113">
        <id>Q15075</id>
    </interactant>
    <interactant intactId="EBI-399437">
        <id>P20339</id>
        <label>RAB5A</label>
    </interactant>
    <organismsDiffer>false</organismsDiffer>
    <experiments>4</experiments>
</comment>
<comment type="interaction">
    <interactant intactId="EBI-298113">
        <id>Q15075</id>
    </interactant>
    <interactant intactId="EBI-399401">
        <id>P61020</id>
        <label>RAB5B</label>
    </interactant>
    <organismsDiffer>false</organismsDiffer>
    <experiments>3</experiments>
</comment>
<comment type="interaction">
    <interactant intactId="EBI-298113">
        <id>Q15075</id>
    </interactant>
    <interactant intactId="EBI-1054923">
        <id>P51148</id>
        <label>RAB5C</label>
    </interactant>
    <organismsDiffer>false</organismsDiffer>
    <experiments>3</experiments>
</comment>
<comment type="interaction">
    <interactant intactId="EBI-298113">
        <id>Q15075</id>
    </interactant>
    <interactant intactId="EBI-2814750">
        <id>Q5K651</id>
        <label>SAMD9</label>
    </interactant>
    <organismsDiffer>false</organismsDiffer>
    <experiments>2</experiments>
</comment>
<comment type="interaction">
    <interactant intactId="EBI-298113">
        <id>Q15075</id>
    </interactant>
    <interactant intactId="EBI-298055">
        <id>Q7Z3T8</id>
        <label>ZFYVE16</label>
    </interactant>
    <organismsDiffer>false</organismsDiffer>
    <experiments>4</experiments>
</comment>
<comment type="interaction">
    <interactant intactId="EBI-298113">
        <id>Q15075</id>
    </interactant>
    <interactant intactId="EBI-8784283">
        <id>Q69Z37</id>
        <label>Samd9l</label>
    </interactant>
    <organismsDiffer>true</organismsDiffer>
    <experiments>2</experiments>
</comment>
<comment type="interaction">
    <interactant intactId="EBI-298113">
        <id>Q15075</id>
    </interactant>
    <interactant intactId="EBI-398854">
        <id>Q63635</id>
        <label>Stx6</label>
    </interactant>
    <organismsDiffer>true</organismsDiffer>
    <experiments>4</experiments>
</comment>
<comment type="subcellular location">
    <subcellularLocation>
        <location>Cytoplasm</location>
    </subcellularLocation>
    <subcellularLocation>
        <location>Early endosome membrane</location>
        <topology>Peripheral membrane protein</topology>
    </subcellularLocation>
</comment>
<comment type="domain">
    <text evidence="14">The FYVE-type zinc finger domain mediates interactions with phosphatidylinositol 3-phosphate in membranes of early endosomes and penetrates bilayers. The FYVE domain insertion into PtdIns(3)P-enriched membranes is substantially increased in acidic conditions.</text>
</comment>
<comment type="miscellaneous">
    <text>Antibodies against EEA1 are found in sera from patients with subacute cutaneous lupus erythematosus and other autoimmune diseases.</text>
</comment>
<name>EEA1_HUMAN</name>
<gene>
    <name type="primary">EEA1</name>
    <name type="synonym">ZFYVE2</name>
</gene>
<sequence length="1411" mass="162466">MLRRILQRTPGRVGSQGSDLDSSATPINTVDVNNESSSEGFICPQCMKSLGSADELFKHYEAVHDAGNDSGHGGESNLALKRDDVTLLRQEVQDLQASLKEEKWYSEELKKELEKYQGLQQQEAKPDGLVTDSSAELQSLEQQLEEAQTENFNIKQMKDLFEQKAAQLATEIADIKSKYDEERSLREAAEQKVTRLTEELNKEATVIQDLKTELLQRPGIEDVAVLKKELVQVQTLMDNMTLERERESEKLKDECKKLQSQYASSEATISQLRSELAKGPQEVAVYVQELQKLKSSVNELTQKNQTLTENLLKKEQDYTKLEEKHNEESVSKKNIQATLHQKDLDCQQLQSRLSASETSLHRIHVELSEKGEATQKLKEELSEVETKYQHLKAEFKQLQQQREEKEQHGLQLQSEINQLHSKLLETERQLGEAHGRLKEQRQLSSEKLMDKEQQVADLQLKLSRLEEQLKEKVTNSTELQHQLDKTKQQHQEQQALQQSTTAKLREAQNDLEQVLRQIGDKDQKIQNLEALLQKSKENISLLEKEREDLYAKIQAGEGETAVLNQLQEKNHTLQEQVTQLTEKLKNQSESHKQAQENLHDQVQEQKAHLRAAQDRVLSLETSVNELNSQLNESKEKVSQLDIQIKAKTELLLSAEAAKTAQRADLQNHLDTAQNALQDKQQELNKITTQLDQVTAKLQDKQEHCSQLESHLKEYKEKYLSLEQKTEELEGQIKKLEADSLEVKASKEQALQDLQQQRQLNTDLELRATELSKQLEMEKEIVSSTRLDLQKKSEALESIKQKLTKQEEEKKILKQDFETLSQETKIQHEELNNRIQTTVTELQKVKMEKEALMTELSTVKDKLSKVSDSLKNSKSEFEKENQKGKAAILDLEKTCKELKHQLQVQMENTLKEQKELKKSLEKEKEASHQLKLELNSMQEQLIQAQNTLKQNEKEEQQLQGNINELKQSSEQKKKQIEALQGELKIAVLQKTELENKLQQQLTQAAQELAAEKEKISVLQNNYEKSQETFKQLQSDFYGRESELLATRQDLKSVEEKLSLAQEDLISNRNQIGNQNKLIQELKTAKATLEQDSAKKEQQLQERCKALQDIQKEKSLKEKELVNEKSKLAEIEEIKCRQEKEITKLNEELKSHKLESIKEITNLKDAKQLLIQQKLELQGKADSLKAAVEQEKRNQQILKDQVKKEEEELKKEFIEKEAKLHSEIKEKEVGMKKHEENEAKLTMQITALNENLGTVKKEWQSSQRRVSELEKQTDDLRGEIAVLEATVQNNQDERRALLERCLKGEGEIEKLQTKVLELQRKLDNTTAAVQELGRENQSLQIKHTQALNRKWAEDNEVQNCMACGKGFSVTVRRHHCRQCGNIFCAECSAKNALTPSSKKPVRVCDACFNDLQG</sequence>
<organism>
    <name type="scientific">Homo sapiens</name>
    <name type="common">Human</name>
    <dbReference type="NCBI Taxonomy" id="9606"/>
    <lineage>
        <taxon>Eukaryota</taxon>
        <taxon>Metazoa</taxon>
        <taxon>Chordata</taxon>
        <taxon>Craniata</taxon>
        <taxon>Vertebrata</taxon>
        <taxon>Euteleostomi</taxon>
        <taxon>Mammalia</taxon>
        <taxon>Eutheria</taxon>
        <taxon>Euarchontoglires</taxon>
        <taxon>Primates</taxon>
        <taxon>Haplorrhini</taxon>
        <taxon>Catarrhini</taxon>
        <taxon>Hominidae</taxon>
        <taxon>Homo</taxon>
    </lineage>
</organism>
<feature type="chain" id="PRO_0000098706" description="Early endosome antigen 1">
    <location>
        <begin position="1"/>
        <end position="1411"/>
    </location>
</feature>
<feature type="zinc finger region" description="C2H2-type" evidence="2">
    <location>
        <begin position="41"/>
        <end position="64"/>
    </location>
</feature>
<feature type="zinc finger region" description="FYVE-type" evidence="3">
    <location>
        <begin position="1352"/>
        <end position="1410"/>
    </location>
</feature>
<feature type="region of interest" description="Disordered" evidence="4">
    <location>
        <begin position="1"/>
        <end position="27"/>
    </location>
</feature>
<feature type="region of interest" description="Disordered" evidence="4">
    <location>
        <begin position="473"/>
        <end position="501"/>
    </location>
</feature>
<feature type="coiled-coil region" evidence="1">
    <location>
        <begin position="74"/>
        <end position="1348"/>
    </location>
</feature>
<feature type="compositionally biased region" description="Polar residues" evidence="4">
    <location>
        <begin position="15"/>
        <end position="27"/>
    </location>
</feature>
<feature type="compositionally biased region" description="Basic and acidic residues" evidence="4">
    <location>
        <begin position="481"/>
        <end position="490"/>
    </location>
</feature>
<feature type="binding site" evidence="3">
    <location>
        <position position="1358"/>
    </location>
    <ligand>
        <name>Zn(2+)</name>
        <dbReference type="ChEBI" id="CHEBI:29105"/>
        <label>1</label>
    </ligand>
</feature>
<feature type="binding site" evidence="3">
    <location>
        <position position="1361"/>
    </location>
    <ligand>
        <name>Zn(2+)</name>
        <dbReference type="ChEBI" id="CHEBI:29105"/>
        <label>1</label>
    </ligand>
</feature>
<feature type="binding site" evidence="3">
    <location>
        <position position="1374"/>
    </location>
    <ligand>
        <name>Zn(2+)</name>
        <dbReference type="ChEBI" id="CHEBI:29105"/>
        <label>2</label>
    </ligand>
</feature>
<feature type="binding site" evidence="3">
    <location>
        <position position="1377"/>
    </location>
    <ligand>
        <name>Zn(2+)</name>
        <dbReference type="ChEBI" id="CHEBI:29105"/>
        <label>2</label>
    </ligand>
</feature>
<feature type="binding site" evidence="3">
    <location>
        <position position="1382"/>
    </location>
    <ligand>
        <name>Zn(2+)</name>
        <dbReference type="ChEBI" id="CHEBI:29105"/>
        <label>1</label>
    </ligand>
</feature>
<feature type="binding site" evidence="3">
    <location>
        <position position="1385"/>
    </location>
    <ligand>
        <name>Zn(2+)</name>
        <dbReference type="ChEBI" id="CHEBI:29105"/>
        <label>1</label>
    </ligand>
</feature>
<feature type="binding site" evidence="3">
    <location>
        <position position="1402"/>
    </location>
    <ligand>
        <name>Zn(2+)</name>
        <dbReference type="ChEBI" id="CHEBI:29105"/>
        <label>2</label>
    </ligand>
</feature>
<feature type="binding site" evidence="3">
    <location>
        <position position="1405"/>
    </location>
    <ligand>
        <name>Zn(2+)</name>
        <dbReference type="ChEBI" id="CHEBI:29105"/>
        <label>2</label>
    </ligand>
</feature>
<feature type="modified residue" description="Phosphoserine" evidence="23">
    <location>
        <position position="52"/>
    </location>
</feature>
<feature type="modified residue" description="Phosphoserine" evidence="22 23">
    <location>
        <position position="70"/>
    </location>
</feature>
<feature type="sequence variant" id="VAR_052980" description="In dbSNP:rs10745623." evidence="18 20">
    <original>K</original>
    <variation>Q</variation>
    <location>
        <position position="810"/>
    </location>
</feature>
<feature type="mutagenesis site" description="Strongly reduces interaction with RAB5C." evidence="12">
    <original>E</original>
    <variation>A</variation>
    <location>
        <position position="39"/>
    </location>
</feature>
<feature type="mutagenesis site" description="Strongly reduces interaction with RAB5C." evidence="12">
    <original>F</original>
    <variation>A</variation>
    <location>
        <position position="41"/>
    </location>
</feature>
<feature type="mutagenesis site" description="Strongly reduces interaction with RAB5C." evidence="12">
    <original>I</original>
    <variation>A</variation>
    <location>
        <position position="42"/>
    </location>
</feature>
<feature type="mutagenesis site" description="Strongly reduces interaction with RAB5C." evidence="12">
    <original>P</original>
    <variation>A</variation>
    <location>
        <position position="44"/>
    </location>
</feature>
<feature type="mutagenesis site" description="Strongly reduces interaction with RAB5C." evidence="12">
    <original>M</original>
    <variation>A</variation>
    <location>
        <position position="47"/>
    </location>
</feature>
<feature type="mutagenesis site" description="Strongly reduces interaction with RAB5C." evidence="12">
    <original>Y</original>
    <variation>A</variation>
    <location>
        <position position="60"/>
    </location>
</feature>
<feature type="mutagenesis site" description="Reduces phosphatidylinositol 3-phosphate binding and endosomal location." evidence="8">
    <original>W</original>
    <variation>A</variation>
    <location>
        <position position="1349"/>
    </location>
</feature>
<feature type="mutagenesis site" description="Reduces phosphatidylinositol 3-phosphate binding and endosomal location." evidence="5">
    <original>D</original>
    <variation>V</variation>
    <location>
        <position position="1352"/>
    </location>
</feature>
<feature type="mutagenesis site" description="Reduces phosphatidylinositol 3-phosphate binding and endosomal location." evidence="5">
    <original>N</original>
    <variation>D</variation>
    <location>
        <position position="1357"/>
    </location>
</feature>
<feature type="mutagenesis site" description="Abolishes phosphatidylinositol 3-phosphate binding and endosomal location." evidence="8">
    <original>C</original>
    <variation>S</variation>
    <location>
        <position position="1358"/>
    </location>
</feature>
<feature type="mutagenesis site" description="Strongly reduces phosphatidylinositol 3-phosphate binding and endosomal location." evidence="8">
    <original>F</original>
    <variation>A</variation>
    <location>
        <position position="1365"/>
    </location>
</feature>
<feature type="mutagenesis site" description="Abolishes phosphatidylinositol 3-phosphate binding and endosomal location." evidence="5">
    <original>VT</original>
    <variation>EE</variation>
    <variation>GG</variation>
    <location>
        <begin position="1367"/>
        <end position="1368"/>
    </location>
</feature>
<feature type="mutagenesis site" description="Abolishes endosomal location." evidence="8">
    <original>R</original>
    <variation>A</variation>
    <location>
        <position position="1370"/>
    </location>
</feature>
<feature type="mutagenesis site" description="Abolishes phosphatidylinositol 3-phosphate binding and endosomal location." evidence="8">
    <original>R</original>
    <variation>A</variation>
    <location>
        <position position="1371"/>
    </location>
</feature>
<feature type="mutagenesis site" description="Abolishes endosomal location. Abolishes pH sensitivity of the FYVE-type zinc finger domain; when associated with A-1373." evidence="8 14">
    <original>H</original>
    <variation>A</variation>
    <location>
        <position position="1372"/>
    </location>
</feature>
<feature type="mutagenesis site" description="Abolishes phosphatidylinositol 3-phosphate binding and endosomal location. Abolishes pH sensitivity of the FYVE-type zinc finger domain; when associated with A-1372." evidence="8 14">
    <original>H</original>
    <variation>A</variation>
    <location>
        <position position="1373"/>
    </location>
</feature>
<feature type="mutagenesis site" description="Abolishes phosphatidylinositol 3-phosphate binding and endosomal location." evidence="8">
    <original>C</original>
    <variation>A</variation>
    <location>
        <position position="1374"/>
    </location>
</feature>
<feature type="mutagenesis site" description="Abolishes phosphatidylinositol 3-phosphate binding and endosomal location." evidence="5 8">
    <original>R</original>
    <variation>G</variation>
    <location>
        <position position="1375"/>
    </location>
</feature>
<feature type="mutagenesis site" description="Abolishes phosphatidylinositol 3-phosphate binding and endosomal location." evidence="8">
    <original>C</original>
    <variation>A</variation>
    <location>
        <position position="1377"/>
    </location>
</feature>
<feature type="mutagenesis site" description="Abolishes phosphatidylinositol 3-phosphate binding and endosomal location." evidence="8">
    <original>G</original>
    <variation>A</variation>
    <location>
        <position position="1378"/>
    </location>
</feature>
<feature type="mutagenesis site" description="Abolishes phosphatidylinositol 3-phosphate binding and endosomal location." evidence="8">
    <original>C</original>
    <variation>A</variation>
    <location>
        <position position="1385"/>
    </location>
</feature>
<feature type="mutagenesis site" description="Strongly reduces phosphatidylinositol 3-phosphate binding and abolishes endosomal location." evidence="5 8">
    <original>R</original>
    <variation>G</variation>
    <location>
        <position position="1400"/>
    </location>
</feature>
<feature type="mutagenesis site" description="Abolishes phosphatidylinositol 3-phosphate binding and endosomal location." evidence="8">
    <original>C</original>
    <variation>S</variation>
    <location>
        <position position="1405"/>
    </location>
</feature>
<feature type="sequence conflict" description="In Ref. 1; AAA79121." evidence="21" ref="1">
    <original>C</original>
    <variation>S</variation>
    <location>
        <position position="255"/>
    </location>
</feature>
<feature type="sequence conflict" description="In Ref. 1; AAA79121." evidence="21" ref="1">
    <original>LQ</original>
    <variation>FE</variation>
    <location>
        <begin position="258"/>
        <end position="259"/>
    </location>
</feature>
<feature type="sequence conflict" description="In Ref. 1; AAA79121." evidence="21" ref="1">
    <original>A</original>
    <variation>S</variation>
    <location>
        <position position="277"/>
    </location>
</feature>
<feature type="sequence conflict" description="In Ref. 1; AAA79121." evidence="21" ref="1">
    <original>A</original>
    <variation>R</variation>
    <location>
        <position position="284"/>
    </location>
</feature>
<feature type="sequence conflict" description="In Ref. 1; AAA79121." evidence="21" ref="1">
    <original>D</original>
    <variation>E</variation>
    <location>
        <position position="520"/>
    </location>
</feature>
<feature type="sequence conflict" description="In Ref. 1; AAA79121." evidence="21" ref="1">
    <original>EQ</original>
    <variation>DE</variation>
    <location>
        <begin position="575"/>
        <end position="576"/>
    </location>
</feature>
<feature type="sequence conflict" description="In Ref. 1; AAA79121." evidence="21" ref="1">
    <original>KL</original>
    <variation>NV</variation>
    <location>
        <begin position="583"/>
        <end position="584"/>
    </location>
</feature>
<feature type="sequence conflict" description="In Ref. 1; AAA79121." evidence="21" ref="1">
    <original>Q</original>
    <variation>H</variation>
    <location>
        <position position="680"/>
    </location>
</feature>
<feature type="sequence conflict" description="In Ref. 1; AAA79121." evidence="21" ref="1">
    <location>
        <position position="1325"/>
    </location>
</feature>
<feature type="strand" evidence="26">
    <location>
        <begin position="38"/>
        <end position="42"/>
    </location>
</feature>
<feature type="turn" evidence="26">
    <location>
        <begin position="44"/>
        <end position="46"/>
    </location>
</feature>
<feature type="strand" evidence="26">
    <location>
        <begin position="49"/>
        <end position="52"/>
    </location>
</feature>
<feature type="helix" evidence="26">
    <location>
        <begin position="53"/>
        <end position="63"/>
    </location>
</feature>
<feature type="strand" evidence="26">
    <location>
        <begin position="65"/>
        <end position="67"/>
    </location>
</feature>
<feature type="helix" evidence="25">
    <location>
        <begin position="1290"/>
        <end position="1324"/>
    </location>
</feature>
<feature type="helix" evidence="25">
    <location>
        <begin position="1326"/>
        <end position="1346"/>
    </location>
</feature>
<feature type="helix" evidence="25">
    <location>
        <begin position="1352"/>
        <end position="1354"/>
    </location>
</feature>
<feature type="turn" evidence="25">
    <location>
        <begin position="1359"/>
        <end position="1361"/>
    </location>
</feature>
<feature type="strand" evidence="25">
    <location>
        <begin position="1367"/>
        <end position="1369"/>
    </location>
</feature>
<feature type="strand" evidence="24">
    <location>
        <begin position="1371"/>
        <end position="1373"/>
    </location>
</feature>
<feature type="turn" evidence="25">
    <location>
        <begin position="1375"/>
        <end position="1377"/>
    </location>
</feature>
<feature type="strand" evidence="24">
    <location>
        <begin position="1380"/>
        <end position="1382"/>
    </location>
</feature>
<feature type="helix" evidence="25">
    <location>
        <begin position="1383"/>
        <end position="1385"/>
    </location>
</feature>
<feature type="strand" evidence="25">
    <location>
        <begin position="1388"/>
        <end position="1390"/>
    </location>
</feature>
<feature type="turn" evidence="24">
    <location>
        <begin position="1393"/>
        <end position="1396"/>
    </location>
</feature>
<feature type="strand" evidence="25">
    <location>
        <begin position="1399"/>
        <end position="1401"/>
    </location>
</feature>
<feature type="helix" evidence="25">
    <location>
        <begin position="1403"/>
        <end position="1408"/>
    </location>
</feature>
<evidence type="ECO:0000255" key="1"/>
<evidence type="ECO:0000255" key="2">
    <source>
        <dbReference type="PROSITE-ProRule" id="PRU00042"/>
    </source>
</evidence>
<evidence type="ECO:0000255" key="3">
    <source>
        <dbReference type="PROSITE-ProRule" id="PRU00091"/>
    </source>
</evidence>
<evidence type="ECO:0000256" key="4">
    <source>
        <dbReference type="SAM" id="MobiDB-lite"/>
    </source>
</evidence>
<evidence type="ECO:0000269" key="5">
    <source>
    </source>
</evidence>
<evidence type="ECO:0000269" key="6">
    <source>
    </source>
</evidence>
<evidence type="ECO:0000269" key="7">
    <source>
    </source>
</evidence>
<evidence type="ECO:0000269" key="8">
    <source>
    </source>
</evidence>
<evidence type="ECO:0000269" key="9">
    <source>
    </source>
</evidence>
<evidence type="ECO:0000269" key="10">
    <source>
    </source>
</evidence>
<evidence type="ECO:0000269" key="11">
    <source>
    </source>
</evidence>
<evidence type="ECO:0000269" key="12">
    <source>
    </source>
</evidence>
<evidence type="ECO:0000269" key="13">
    <source>
    </source>
</evidence>
<evidence type="ECO:0000269" key="14">
    <source>
    </source>
</evidence>
<evidence type="ECO:0000269" key="15">
    <source>
    </source>
</evidence>
<evidence type="ECO:0000269" key="16">
    <source>
    </source>
</evidence>
<evidence type="ECO:0000269" key="17">
    <source>
    </source>
</evidence>
<evidence type="ECO:0000269" key="18">
    <source>
    </source>
</evidence>
<evidence type="ECO:0000269" key="19">
    <source>
    </source>
</evidence>
<evidence type="ECO:0000269" key="20">
    <source ref="2"/>
</evidence>
<evidence type="ECO:0000305" key="21"/>
<evidence type="ECO:0007744" key="22">
    <source>
    </source>
</evidence>
<evidence type="ECO:0007744" key="23">
    <source>
    </source>
</evidence>
<evidence type="ECO:0007829" key="24">
    <source>
        <dbReference type="PDB" id="1HYI"/>
    </source>
</evidence>
<evidence type="ECO:0007829" key="25">
    <source>
        <dbReference type="PDB" id="1JOC"/>
    </source>
</evidence>
<evidence type="ECO:0007829" key="26">
    <source>
        <dbReference type="PDB" id="3MJH"/>
    </source>
</evidence>
<reference key="1">
    <citation type="journal article" date="1995" name="J. Biol. Chem.">
        <title>EEA1, an early endosome-associated protein. EEA1 is a conserved alpha-helical peripheral membrane protein flanked by cysteine 'fingers' and contains a calmodulin-binding IQ motif.</title>
        <authorList>
            <person name="Mu F.-T."/>
            <person name="Callaghan J.M."/>
            <person name="Steele-Mortimer O."/>
            <person name="Stenmark H."/>
            <person name="Parton R.G."/>
            <person name="Campbell P.L."/>
            <person name="McCluskey J."/>
            <person name="Yeo J.-P."/>
            <person name="Tock E.P.C."/>
            <person name="Toh B.-H."/>
        </authorList>
    </citation>
    <scope>NUCLEOTIDE SEQUENCE [MRNA]</scope>
    <scope>SUBCELLULAR LOCATION</scope>
    <scope>VARIANT GLN-810</scope>
    <source>
        <tissue>Cervix carcinoma</tissue>
    </source>
</reference>
<reference key="2">
    <citation type="submission" date="1994-04" db="EMBL/GenBank/DDBJ databases">
        <authorList>
            <person name="Seelig H.P."/>
        </authorList>
    </citation>
    <scope>NUCLEOTIDE SEQUENCE [MRNA]</scope>
    <scope>VARIANT GLN-810</scope>
</reference>
<reference key="3">
    <citation type="journal article" date="2006" name="Nature">
        <title>The finished DNA sequence of human chromosome 12.</title>
        <authorList>
            <person name="Scherer S.E."/>
            <person name="Muzny D.M."/>
            <person name="Buhay C.J."/>
            <person name="Chen R."/>
            <person name="Cree A."/>
            <person name="Ding Y."/>
            <person name="Dugan-Rocha S."/>
            <person name="Gill R."/>
            <person name="Gunaratne P."/>
            <person name="Harris R.A."/>
            <person name="Hawes A.C."/>
            <person name="Hernandez J."/>
            <person name="Hodgson A.V."/>
            <person name="Hume J."/>
            <person name="Jackson A."/>
            <person name="Khan Z.M."/>
            <person name="Kovar-Smith C."/>
            <person name="Lewis L.R."/>
            <person name="Lozado R.J."/>
            <person name="Metzker M.L."/>
            <person name="Milosavljevic A."/>
            <person name="Miner G.R."/>
            <person name="Montgomery K.T."/>
            <person name="Morgan M.B."/>
            <person name="Nazareth L.V."/>
            <person name="Scott G."/>
            <person name="Sodergren E."/>
            <person name="Song X.-Z."/>
            <person name="Steffen D."/>
            <person name="Lovering R.C."/>
            <person name="Wheeler D.A."/>
            <person name="Worley K.C."/>
            <person name="Yuan Y."/>
            <person name="Zhang Z."/>
            <person name="Adams C.Q."/>
            <person name="Ansari-Lari M.A."/>
            <person name="Ayele M."/>
            <person name="Brown M.J."/>
            <person name="Chen G."/>
            <person name="Chen Z."/>
            <person name="Clerc-Blankenburg K.P."/>
            <person name="Davis C."/>
            <person name="Delgado O."/>
            <person name="Dinh H.H."/>
            <person name="Draper H."/>
            <person name="Gonzalez-Garay M.L."/>
            <person name="Havlak P."/>
            <person name="Jackson L.R."/>
            <person name="Jacob L.S."/>
            <person name="Kelly S.H."/>
            <person name="Li L."/>
            <person name="Li Z."/>
            <person name="Liu J."/>
            <person name="Liu W."/>
            <person name="Lu J."/>
            <person name="Maheshwari M."/>
            <person name="Nguyen B.-V."/>
            <person name="Okwuonu G.O."/>
            <person name="Pasternak S."/>
            <person name="Perez L.M."/>
            <person name="Plopper F.J.H."/>
            <person name="Santibanez J."/>
            <person name="Shen H."/>
            <person name="Tabor P.E."/>
            <person name="Verduzco D."/>
            <person name="Waldron L."/>
            <person name="Wang Q."/>
            <person name="Williams G.A."/>
            <person name="Zhang J."/>
            <person name="Zhou J."/>
            <person name="Allen C.C."/>
            <person name="Amin A.G."/>
            <person name="Anyalebechi V."/>
            <person name="Bailey M."/>
            <person name="Barbaria J.A."/>
            <person name="Bimage K.E."/>
            <person name="Bryant N.P."/>
            <person name="Burch P.E."/>
            <person name="Burkett C.E."/>
            <person name="Burrell K.L."/>
            <person name="Calderon E."/>
            <person name="Cardenas V."/>
            <person name="Carter K."/>
            <person name="Casias K."/>
            <person name="Cavazos I."/>
            <person name="Cavazos S.R."/>
            <person name="Ceasar H."/>
            <person name="Chacko J."/>
            <person name="Chan S.N."/>
            <person name="Chavez D."/>
            <person name="Christopoulos C."/>
            <person name="Chu J."/>
            <person name="Cockrell R."/>
            <person name="Cox C.D."/>
            <person name="Dang M."/>
            <person name="Dathorne S.R."/>
            <person name="David R."/>
            <person name="Davis C.M."/>
            <person name="Davy-Carroll L."/>
            <person name="Deshazo D.R."/>
            <person name="Donlin J.E."/>
            <person name="D'Souza L."/>
            <person name="Eaves K.A."/>
            <person name="Egan A."/>
            <person name="Emery-Cohen A.J."/>
            <person name="Escotto M."/>
            <person name="Flagg N."/>
            <person name="Forbes L.D."/>
            <person name="Gabisi A.M."/>
            <person name="Garza M."/>
            <person name="Hamilton C."/>
            <person name="Henderson N."/>
            <person name="Hernandez O."/>
            <person name="Hines S."/>
            <person name="Hogues M.E."/>
            <person name="Huang M."/>
            <person name="Idlebird D.G."/>
            <person name="Johnson R."/>
            <person name="Jolivet A."/>
            <person name="Jones S."/>
            <person name="Kagan R."/>
            <person name="King L.M."/>
            <person name="Leal B."/>
            <person name="Lebow H."/>
            <person name="Lee S."/>
            <person name="LeVan J.M."/>
            <person name="Lewis L.C."/>
            <person name="London P."/>
            <person name="Lorensuhewa L.M."/>
            <person name="Loulseged H."/>
            <person name="Lovett D.A."/>
            <person name="Lucier A."/>
            <person name="Lucier R.L."/>
            <person name="Ma J."/>
            <person name="Madu R.C."/>
            <person name="Mapua P."/>
            <person name="Martindale A.D."/>
            <person name="Martinez E."/>
            <person name="Massey E."/>
            <person name="Mawhiney S."/>
            <person name="Meador M.G."/>
            <person name="Mendez S."/>
            <person name="Mercado C."/>
            <person name="Mercado I.C."/>
            <person name="Merritt C.E."/>
            <person name="Miner Z.L."/>
            <person name="Minja E."/>
            <person name="Mitchell T."/>
            <person name="Mohabbat F."/>
            <person name="Mohabbat K."/>
            <person name="Montgomery B."/>
            <person name="Moore N."/>
            <person name="Morris S."/>
            <person name="Munidasa M."/>
            <person name="Ngo R.N."/>
            <person name="Nguyen N.B."/>
            <person name="Nickerson E."/>
            <person name="Nwaokelemeh O.O."/>
            <person name="Nwokenkwo S."/>
            <person name="Obregon M."/>
            <person name="Oguh M."/>
            <person name="Oragunye N."/>
            <person name="Oviedo R.J."/>
            <person name="Parish B.J."/>
            <person name="Parker D.N."/>
            <person name="Parrish J."/>
            <person name="Parks K.L."/>
            <person name="Paul H.A."/>
            <person name="Payton B.A."/>
            <person name="Perez A."/>
            <person name="Perrin W."/>
            <person name="Pickens A."/>
            <person name="Primus E.L."/>
            <person name="Pu L.-L."/>
            <person name="Puazo M."/>
            <person name="Quiles M.M."/>
            <person name="Quiroz J.B."/>
            <person name="Rabata D."/>
            <person name="Reeves K."/>
            <person name="Ruiz S.J."/>
            <person name="Shao H."/>
            <person name="Sisson I."/>
            <person name="Sonaike T."/>
            <person name="Sorelle R.P."/>
            <person name="Sutton A.E."/>
            <person name="Svatek A.F."/>
            <person name="Svetz L.A."/>
            <person name="Tamerisa K.S."/>
            <person name="Taylor T.R."/>
            <person name="Teague B."/>
            <person name="Thomas N."/>
            <person name="Thorn R.D."/>
            <person name="Trejos Z.Y."/>
            <person name="Trevino B.K."/>
            <person name="Ukegbu O.N."/>
            <person name="Urban J.B."/>
            <person name="Vasquez L.I."/>
            <person name="Vera V.A."/>
            <person name="Villasana D.M."/>
            <person name="Wang L."/>
            <person name="Ward-Moore S."/>
            <person name="Warren J.T."/>
            <person name="Wei X."/>
            <person name="White F."/>
            <person name="Williamson A.L."/>
            <person name="Wleczyk R."/>
            <person name="Wooden H.S."/>
            <person name="Wooden S.H."/>
            <person name="Yen J."/>
            <person name="Yoon L."/>
            <person name="Yoon V."/>
            <person name="Zorrilla S.E."/>
            <person name="Nelson D."/>
            <person name="Kucherlapati R."/>
            <person name="Weinstock G."/>
            <person name="Gibbs R.A."/>
        </authorList>
    </citation>
    <scope>NUCLEOTIDE SEQUENCE [LARGE SCALE GENOMIC DNA]</scope>
</reference>
<reference key="4">
    <citation type="submission" date="2008-12" db="UniProtKB">
        <authorList>
            <person name="Lubec G."/>
            <person name="Chen W.-Q."/>
            <person name="Sun Y."/>
        </authorList>
    </citation>
    <scope>PROTEIN SEQUENCE OF 996-1011 AND 1319-1332</scope>
    <scope>IDENTIFICATION BY MASS SPECTROMETRY</scope>
    <source>
        <tissue>Fetal brain cortex</tissue>
    </source>
</reference>
<reference key="5">
    <citation type="journal article" date="1998" name="Nature">
        <title>EEA1 links PI(3)K function to Rab5 regulation of endosome fusion.</title>
        <authorList>
            <person name="Simonsen A."/>
            <person name="Lippe R."/>
            <person name="Christoforidis S."/>
            <person name="Gaullier J.-M."/>
            <person name="Brech A."/>
            <person name="Callaghan J.M."/>
            <person name="Toh B.-H."/>
            <person name="Murphy C."/>
            <person name="Zerial M."/>
            <person name="Stenmark H."/>
        </authorList>
    </citation>
    <scope>INTERACTION WITH RAB5A</scope>
</reference>
<reference key="6">
    <citation type="journal article" date="1999" name="Eur. J. Biochem.">
        <title>Direct interaction of EEA1 with Rab5b.</title>
        <authorList>
            <person name="Callaghan J.M."/>
            <person name="Nixon S."/>
            <person name="Bucci C."/>
            <person name="Toh B.-H."/>
            <person name="Stenmark H."/>
        </authorList>
    </citation>
    <scope>INTERACTION WITH RAB5A AND RAB5B</scope>
</reference>
<reference key="7">
    <citation type="journal article" date="1999" name="J. Biol. Chem.">
        <title>The Rab5 effector EEA1 interacts directly with syntaxin-6.</title>
        <authorList>
            <person name="Simonsen A."/>
            <person name="Gaullier J.-M."/>
            <person name="D'Arrigo A."/>
            <person name="Stenmark H."/>
        </authorList>
    </citation>
    <scope>INTERACTION WITH STX6</scope>
    <scope>SUBCELLULAR LOCATION</scope>
</reference>
<reference key="8">
    <citation type="journal article" date="1999" name="Mol. Cell">
        <title>Phosphatidylinositol 3-phosphate recognition by the FYVE domain.</title>
        <authorList>
            <person name="Kutateladze T.G."/>
            <person name="Ogburn K.D."/>
            <person name="Watson W.T."/>
            <person name="de Beer T."/>
            <person name="Emr S.D."/>
            <person name="Burd C.G."/>
            <person name="Overduin M."/>
        </authorList>
    </citation>
    <scope>MUTAGENESIS OF ASP-1352; ASN-1357; 1367-VAL-THR-1368; ARG-1375 AND ARG-1400</scope>
    <scope>HOMODIMERIZATION</scope>
    <scope>INTERACTION WITH PHOSPHATIDYLINOSITOL 3-PHOSPHATE</scope>
</reference>
<reference key="9">
    <citation type="journal article" date="2000" name="J. Biol. Chem.">
        <title>Interaction of the EEA1 FYVE finger with phosphatidylinositol 3-phosphate and early endosomes. Role of conserved residues.</title>
        <authorList>
            <person name="Gaullier J.-M."/>
            <person name="Roenning E."/>
            <person name="Gillooly D.J."/>
            <person name="Stenmark H."/>
        </authorList>
    </citation>
    <scope>MUTAGENESIS OF TRP-1349; CYS-1358; PHE-1365; ARG-1370; ARG-1371; HIS-1372; HIS-1373; CYS-1374; ARG-1375; CYS-1377; GLY-1378; CYS-1385; ARG-1400 AND CYS-1405</scope>
    <scope>SUBCELLULAR LOCATION</scope>
    <scope>INTERACTION WITH PHOSPHATIDYLINOSITOL 3-PHOSPHATE</scope>
</reference>
<reference key="10">
    <citation type="journal article" date="2002" name="J. Cell Sci.">
        <title>The small GTPase Rab22 interacts with EEA1 and controls endosomal membrane trafficking.</title>
        <authorList>
            <person name="Kauppi M."/>
            <person name="Simonsen A."/>
            <person name="Bremnes B."/>
            <person name="Vieira A."/>
            <person name="Callaghan J.M."/>
            <person name="Stenmark H."/>
            <person name="Olkkonen V.M."/>
        </authorList>
    </citation>
    <scope>INTERACTION WITH RAB22A</scope>
</reference>
<reference key="11">
    <citation type="journal article" date="2003" name="J. Biol. Chem.">
        <title>Determinants of Rab5 interaction with the N-terminus of early endosome antigen 1.</title>
        <authorList>
            <person name="Merithew E."/>
            <person name="Stone C."/>
            <person name="Eathiraj S."/>
            <person name="Lambright D.G."/>
        </authorList>
    </citation>
    <scope>MUTAGENESIS OF GLU-39; PHE-41; ILE-42; PRO-44; MET-47 AND TYR-60</scope>
    <scope>HOMODIMERIZATION</scope>
    <scope>INTERACTION WITH RAB5C</scope>
</reference>
<reference key="12">
    <citation type="journal article" date="2005" name="Mol. Cell. Biol.">
        <title>Endosomal transport of ErbB-2: mechanism for nuclear entry of the cell surface receptor.</title>
        <authorList>
            <person name="Giri D.K."/>
            <person name="Ali-Seyed M."/>
            <person name="Li L.Y."/>
            <person name="Lee D.F."/>
            <person name="Ling P."/>
            <person name="Bartholomeusz G."/>
            <person name="Wang S.C."/>
            <person name="Hung M.C."/>
        </authorList>
    </citation>
    <scope>INTERACTION WITH ERBB2</scope>
</reference>
<reference key="13">
    <citation type="journal article" date="2009" name="J. Cell. Physiol.">
        <title>Rab22B is expressed in the CNS astroglia lineage and plays a role in epidermal growth factor receptor trafficking in A431 cells.</title>
        <authorList>
            <person name="Ng E.L."/>
            <person name="Ng J.J."/>
            <person name="Liang F."/>
            <person name="Tang B.L."/>
        </authorList>
    </citation>
    <scope>SUBCELLULAR LOCATION</scope>
    <scope>INTERACTION WITH RAB31</scope>
</reference>
<reference key="14">
    <citation type="journal article" date="2009" name="Proteins">
        <title>Membrane insertion of the FYVE domain is modulated by pH.</title>
        <authorList>
            <person name="He J."/>
            <person name="Vora M."/>
            <person name="Haney R.M."/>
            <person name="Filonov G.S."/>
            <person name="Musselman C.A."/>
            <person name="Burd C.G."/>
            <person name="Kutateladze A.G."/>
            <person name="Verkhusha V.V."/>
            <person name="Stahelin R.V."/>
            <person name="Kutateladze T.G."/>
        </authorList>
    </citation>
    <scope>DOMAIN FYVE-TYPE ZINC-FINGER</scope>
    <scope>MUTAGENESIS OF HIS-1372 AND HIS-1373</scope>
</reference>
<reference key="15">
    <citation type="journal article" date="2010" name="Sci. Signal.">
        <title>Quantitative phosphoproteomics reveals widespread full phosphorylation site occupancy during mitosis.</title>
        <authorList>
            <person name="Olsen J.V."/>
            <person name="Vermeulen M."/>
            <person name="Santamaria A."/>
            <person name="Kumar C."/>
            <person name="Miller M.L."/>
            <person name="Jensen L.J."/>
            <person name="Gnad F."/>
            <person name="Cox J."/>
            <person name="Jensen T.S."/>
            <person name="Nigg E.A."/>
            <person name="Brunak S."/>
            <person name="Mann M."/>
        </authorList>
    </citation>
    <scope>PHOSPHORYLATION [LARGE SCALE ANALYSIS] AT SER-70</scope>
    <scope>IDENTIFICATION BY MASS SPECTROMETRY [LARGE SCALE ANALYSIS]</scope>
    <source>
        <tissue>Cervix carcinoma</tissue>
    </source>
</reference>
<reference key="16">
    <citation type="journal article" date="2011" name="BMC Syst. Biol.">
        <title>Initial characterization of the human central proteome.</title>
        <authorList>
            <person name="Burkard T.R."/>
            <person name="Planyavsky M."/>
            <person name="Kaupe I."/>
            <person name="Breitwieser F.P."/>
            <person name="Buerckstuemmer T."/>
            <person name="Bennett K.L."/>
            <person name="Superti-Furga G."/>
            <person name="Colinge J."/>
        </authorList>
    </citation>
    <scope>IDENTIFICATION BY MASS SPECTROMETRY [LARGE SCALE ANALYSIS]</scope>
</reference>
<reference key="17">
    <citation type="journal article" date="2012" name="Traffic">
        <title>The PtdIns3P-binding protein Phafin 2 mediates epidermal growth factor receptor degradation by promoting endosome fusion.</title>
        <authorList>
            <person name="Pedersen N.M."/>
            <person name="Raiborg C."/>
            <person name="Brech A."/>
            <person name="Skarpen E."/>
            <person name="Roxrud I."/>
            <person name="Platta H.W."/>
            <person name="Liestol K."/>
            <person name="Stenmark H."/>
        </authorList>
    </citation>
    <scope>INTERACTION WITH PLEKHF2</scope>
    <scope>SUBCELLULAR LOCATION</scope>
</reference>
<reference key="18">
    <citation type="journal article" date="2013" name="Cancer Cell">
        <title>Haploinsufficiency of SAMD9L, an endosome fusion facilitator, causes myeloid malignancies in mice mimicking human diseases with monosomy 7.</title>
        <authorList>
            <person name="Nagamachi A."/>
            <person name="Matsui H."/>
            <person name="Asou H."/>
            <person name="Ozaki Y."/>
            <person name="Aki D."/>
            <person name="Kanai A."/>
            <person name="Takubo K."/>
            <person name="Suda T."/>
            <person name="Nakamura T."/>
            <person name="Wolff L."/>
            <person name="Honda H."/>
            <person name="Inaba T."/>
        </authorList>
    </citation>
    <scope>INTERACTION WITH SAMD9 AND SAMD9L</scope>
</reference>
<reference key="19">
    <citation type="journal article" date="2013" name="J. Proteome Res.">
        <title>Toward a comprehensive characterization of a human cancer cell phosphoproteome.</title>
        <authorList>
            <person name="Zhou H."/>
            <person name="Di Palma S."/>
            <person name="Preisinger C."/>
            <person name="Peng M."/>
            <person name="Polat A.N."/>
            <person name="Heck A.J."/>
            <person name="Mohammed S."/>
        </authorList>
    </citation>
    <scope>PHOSPHORYLATION [LARGE SCALE ANALYSIS] AT SER-52 AND SER-70</scope>
    <scope>IDENTIFICATION BY MASS SPECTROMETRY [LARGE SCALE ANALYSIS]</scope>
    <source>
        <tissue>Cervix carcinoma</tissue>
        <tissue>Erythroleukemia</tissue>
    </source>
</reference>
<reference key="20">
    <citation type="journal article" date="2014" name="J. Proteomics">
        <title>An enzyme assisted RP-RPLC approach for in-depth analysis of human liver phosphoproteome.</title>
        <authorList>
            <person name="Bian Y."/>
            <person name="Song C."/>
            <person name="Cheng K."/>
            <person name="Dong M."/>
            <person name="Wang F."/>
            <person name="Huang J."/>
            <person name="Sun D."/>
            <person name="Wang L."/>
            <person name="Ye M."/>
            <person name="Zou H."/>
        </authorList>
    </citation>
    <scope>IDENTIFICATION BY MASS SPECTROMETRY [LARGE SCALE ANALYSIS]</scope>
    <source>
        <tissue>Liver</tissue>
    </source>
</reference>
<reference key="21">
    <citation type="journal article" date="2001" name="Mol. Cell">
        <title>Multivalent endosome targeting by homodimeric EEA1.</title>
        <authorList>
            <person name="Dumas J.J."/>
            <person name="Merithew E."/>
            <person name="Sudharshan E."/>
            <person name="Rajamani D."/>
            <person name="Hayes S."/>
            <person name="Lawe D."/>
            <person name="Corvera S."/>
            <person name="Lambright D.G."/>
        </authorList>
    </citation>
    <scope>X-RAY CRYSTALLOGRAPHY (2.2 ANGSTROMS) OF 1289-1411 IN COMPLEX WITH PHOSPHATIDYLINOSITOL 3-PHOSPHATE</scope>
    <scope>HOMODIMERIZATION</scope>
</reference>
<reference key="22">
    <citation type="journal article" date="2001" name="Science">
        <title>Structural mechanism of endosome docking by the FYVE domain.</title>
        <authorList>
            <person name="Kutateladze T.G."/>
            <person name="Overduin M."/>
        </authorList>
    </citation>
    <scope>STRUCTURE BY NMR OF 1346-1410 ALONE AND IN COMPLEX WITH PHOSPHATIDYLINOSITOL 3-PHOSPHATE</scope>
</reference>
<protein>
    <recommendedName>
        <fullName>Early endosome antigen 1</fullName>
    </recommendedName>
    <alternativeName>
        <fullName>Endosome-associated protein p162</fullName>
    </alternativeName>
    <alternativeName>
        <fullName>Zinc finger FYVE domain-containing protein 2</fullName>
    </alternativeName>
</protein>